<evidence type="ECO:0000255" key="1">
    <source>
        <dbReference type="HAMAP-Rule" id="MF_01221"/>
    </source>
</evidence>
<feature type="chain" id="PRO_1000164863" description="UPF0210 protein Blon_2054/BLIJ_2131">
    <location>
        <begin position="1"/>
        <end position="454"/>
    </location>
</feature>
<dbReference type="EMBL" id="CP001095">
    <property type="protein sequence ID" value="ACJ53118.1"/>
    <property type="molecule type" value="Genomic_DNA"/>
</dbReference>
<dbReference type="EMBL" id="AP010889">
    <property type="protein sequence ID" value="BAJ69708.1"/>
    <property type="molecule type" value="Genomic_DNA"/>
</dbReference>
<dbReference type="RefSeq" id="WP_012578323.1">
    <property type="nucleotide sequence ID" value="NC_011593.1"/>
</dbReference>
<dbReference type="SMR" id="B7GUH2"/>
<dbReference type="KEGG" id="bln:Blon_2054"/>
<dbReference type="KEGG" id="blon:BLIJ_2131"/>
<dbReference type="PATRIC" id="fig|391904.8.peg.2138"/>
<dbReference type="HOGENOM" id="CLU_048704_0_0_11"/>
<dbReference type="Proteomes" id="UP000001360">
    <property type="component" value="Chromosome"/>
</dbReference>
<dbReference type="CDD" id="cd08025">
    <property type="entry name" value="RNR_PFL_like_DUF711"/>
    <property type="match status" value="1"/>
</dbReference>
<dbReference type="Gene3D" id="3.20.70.20">
    <property type="match status" value="1"/>
</dbReference>
<dbReference type="HAMAP" id="MF_01221">
    <property type="entry name" value="UPF0210"/>
    <property type="match status" value="1"/>
</dbReference>
<dbReference type="InterPro" id="IPR007841">
    <property type="entry name" value="UPF0210"/>
</dbReference>
<dbReference type="NCBIfam" id="NF003700">
    <property type="entry name" value="PRK05313.1"/>
    <property type="match status" value="1"/>
</dbReference>
<dbReference type="PANTHER" id="PTHR37560:SF1">
    <property type="entry name" value="UPF0210 PROTEIN MJ1665"/>
    <property type="match status" value="1"/>
</dbReference>
<dbReference type="PANTHER" id="PTHR37560">
    <property type="entry name" value="UPF0210 PROTEIN SPR0218"/>
    <property type="match status" value="1"/>
</dbReference>
<dbReference type="Pfam" id="PF05167">
    <property type="entry name" value="DUF711"/>
    <property type="match status" value="1"/>
</dbReference>
<dbReference type="SUPFAM" id="SSF51998">
    <property type="entry name" value="PFL-like glycyl radical enzymes"/>
    <property type="match status" value="1"/>
</dbReference>
<gene>
    <name type="ordered locus">Blon_2054</name>
    <name type="ordered locus">BLIJ_2131</name>
</gene>
<proteinExistence type="inferred from homology"/>
<name>Y2054_BIFLS</name>
<sequence>MLNIMEVHETNQMIEQEKLDVRTITMGISLLDCASDDVDKTCDNIYRKITTYAKDLVSTGKAIERDYGIPIVNKRITVTPISLVGASSCKTSEDFVKIAHALDKAAKEVGVDLIGGYSALVSKSMTPAEELLIRSLPQALSETDIVCSSVNVGSTKTGIDMNAVELLGHIIKDVAERTADNDSYGCVKFVAFCNVPDDNPFMAGGFHGVTEGDAVINVGVSGPGVVSRALDAAKGKDFEFLCETIKRTAFKITRVGQLVAQEASRRLGIPFGIIDLSLAPTPAVGDSVGEVLEKIGLEQVGAPGTTAALAMLNDQVKKGGIMASSYVGGLSGAFIPVSEDKNMIDAASSGCLTLEKLEAMTCVCSVGLDMIAIPGDTSASTISGLIADEAAIGMVNQKTTAVRVIPVEGKGVGEMANFGGLMGYAPIIPVNQTSCEAFVTRGGRIPAPIHSFKN</sequence>
<protein>
    <recommendedName>
        <fullName evidence="1">UPF0210 protein Blon_2054/BLIJ_2131</fullName>
    </recommendedName>
</protein>
<reference key="1">
    <citation type="journal article" date="2008" name="Proc. Natl. Acad. Sci. U.S.A.">
        <title>The genome sequence of Bifidobacterium longum subsp. infantis reveals adaptations for milk utilization within the infant microbiome.</title>
        <authorList>
            <person name="Sela D.A."/>
            <person name="Chapman J."/>
            <person name="Adeuya A."/>
            <person name="Kim J.H."/>
            <person name="Chen F."/>
            <person name="Whitehead T.R."/>
            <person name="Lapidus A."/>
            <person name="Rokhsar D.S."/>
            <person name="Lebrilla C.B."/>
            <person name="German J.B."/>
            <person name="Price N.P."/>
            <person name="Richardson P.M."/>
            <person name="Mills D.A."/>
        </authorList>
    </citation>
    <scope>NUCLEOTIDE SEQUENCE [LARGE SCALE GENOMIC DNA]</scope>
    <source>
        <strain>ATCC 15697 / DSM 20088 / JCM 1222 / NCTC 11817 / S12</strain>
    </source>
</reference>
<reference key="2">
    <citation type="journal article" date="2011" name="Nature">
        <title>Bifidobacteria can protect from enteropathogenic infection through production of acetate.</title>
        <authorList>
            <person name="Fukuda S."/>
            <person name="Toh H."/>
            <person name="Hase K."/>
            <person name="Oshima K."/>
            <person name="Nakanishi Y."/>
            <person name="Yoshimura K."/>
            <person name="Tobe T."/>
            <person name="Clarke J.M."/>
            <person name="Topping D.L."/>
            <person name="Suzuki T."/>
            <person name="Taylor T.D."/>
            <person name="Itoh K."/>
            <person name="Kikuchi J."/>
            <person name="Morita H."/>
            <person name="Hattori M."/>
            <person name="Ohno H."/>
        </authorList>
    </citation>
    <scope>NUCLEOTIDE SEQUENCE [LARGE SCALE GENOMIC DNA]</scope>
    <source>
        <strain>ATCC 15697 / DSM 20088 / JCM 1222 / NCTC 11817 / S12</strain>
    </source>
</reference>
<accession>B7GUH2</accession>
<accession>E8MMD1</accession>
<organism>
    <name type="scientific">Bifidobacterium longum subsp. infantis (strain ATCC 15697 / DSM 20088 / JCM 1222 / NCTC 11817 / S12)</name>
    <dbReference type="NCBI Taxonomy" id="391904"/>
    <lineage>
        <taxon>Bacteria</taxon>
        <taxon>Bacillati</taxon>
        <taxon>Actinomycetota</taxon>
        <taxon>Actinomycetes</taxon>
        <taxon>Bifidobacteriales</taxon>
        <taxon>Bifidobacteriaceae</taxon>
        <taxon>Bifidobacterium</taxon>
    </lineage>
</organism>
<comment type="subunit">
    <text evidence="1">Homodimer.</text>
</comment>
<comment type="similarity">
    <text evidence="1">Belongs to the UPF0210 family.</text>
</comment>